<reference key="1">
    <citation type="journal article" date="2001" name="J. Biol. Chem.">
        <title>Molecular cloning and characterization of a novel human galactose 3-O-sulfotransferase that transfers sulfate to Galbeta1-&gt;3GalNAc residue in O-glycans.</title>
        <authorList>
            <person name="Seko A."/>
            <person name="Hara-Kuge S."/>
            <person name="Yamashita K."/>
        </authorList>
    </citation>
    <scope>NUCLEOTIDE SEQUENCE [MRNA] (ISOFORM 1)</scope>
    <scope>FUNCTION</scope>
    <scope>TISSUE SPECIFICITY</scope>
    <source>
        <tissue>Testis</tissue>
    </source>
</reference>
<reference key="2">
    <citation type="journal article" date="2004" name="Proc. Natl. Acad. Sci. U.S.A.">
        <title>Large-scale cDNA transfection screening for genes related to cancer development and progression.</title>
        <authorList>
            <person name="Wan D."/>
            <person name="Gong Y."/>
            <person name="Qin W."/>
            <person name="Zhang P."/>
            <person name="Li J."/>
            <person name="Wei L."/>
            <person name="Zhou X."/>
            <person name="Li H."/>
            <person name="Qiu X."/>
            <person name="Zhong F."/>
            <person name="He L."/>
            <person name="Yu J."/>
            <person name="Yao G."/>
            <person name="Jiang H."/>
            <person name="Qian L."/>
            <person name="Yu Y."/>
            <person name="Shu H."/>
            <person name="Chen X."/>
            <person name="Xu H."/>
            <person name="Guo M."/>
            <person name="Pan Z."/>
            <person name="Chen Y."/>
            <person name="Ge C."/>
            <person name="Yang S."/>
            <person name="Gu J."/>
        </authorList>
    </citation>
    <scope>NUCLEOTIDE SEQUENCE [LARGE SCALE MRNA] (ISOFORM 1)</scope>
    <scope>VARIANT VAL-467</scope>
</reference>
<reference key="3">
    <citation type="journal article" date="2004" name="Nat. Genet.">
        <title>Complete sequencing and characterization of 21,243 full-length human cDNAs.</title>
        <authorList>
            <person name="Ota T."/>
            <person name="Suzuki Y."/>
            <person name="Nishikawa T."/>
            <person name="Otsuki T."/>
            <person name="Sugiyama T."/>
            <person name="Irie R."/>
            <person name="Wakamatsu A."/>
            <person name="Hayashi K."/>
            <person name="Sato H."/>
            <person name="Nagai K."/>
            <person name="Kimura K."/>
            <person name="Makita H."/>
            <person name="Sekine M."/>
            <person name="Obayashi M."/>
            <person name="Nishi T."/>
            <person name="Shibahara T."/>
            <person name="Tanaka T."/>
            <person name="Ishii S."/>
            <person name="Yamamoto J."/>
            <person name="Saito K."/>
            <person name="Kawai Y."/>
            <person name="Isono Y."/>
            <person name="Nakamura Y."/>
            <person name="Nagahari K."/>
            <person name="Murakami K."/>
            <person name="Yasuda T."/>
            <person name="Iwayanagi T."/>
            <person name="Wagatsuma M."/>
            <person name="Shiratori A."/>
            <person name="Sudo H."/>
            <person name="Hosoiri T."/>
            <person name="Kaku Y."/>
            <person name="Kodaira H."/>
            <person name="Kondo H."/>
            <person name="Sugawara M."/>
            <person name="Takahashi M."/>
            <person name="Kanda K."/>
            <person name="Yokoi T."/>
            <person name="Furuya T."/>
            <person name="Kikkawa E."/>
            <person name="Omura Y."/>
            <person name="Abe K."/>
            <person name="Kamihara K."/>
            <person name="Katsuta N."/>
            <person name="Sato K."/>
            <person name="Tanikawa M."/>
            <person name="Yamazaki M."/>
            <person name="Ninomiya K."/>
            <person name="Ishibashi T."/>
            <person name="Yamashita H."/>
            <person name="Murakawa K."/>
            <person name="Fujimori K."/>
            <person name="Tanai H."/>
            <person name="Kimata M."/>
            <person name="Watanabe M."/>
            <person name="Hiraoka S."/>
            <person name="Chiba Y."/>
            <person name="Ishida S."/>
            <person name="Ono Y."/>
            <person name="Takiguchi S."/>
            <person name="Watanabe S."/>
            <person name="Yosida M."/>
            <person name="Hotuta T."/>
            <person name="Kusano J."/>
            <person name="Kanehori K."/>
            <person name="Takahashi-Fujii A."/>
            <person name="Hara H."/>
            <person name="Tanase T.-O."/>
            <person name="Nomura Y."/>
            <person name="Togiya S."/>
            <person name="Komai F."/>
            <person name="Hara R."/>
            <person name="Takeuchi K."/>
            <person name="Arita M."/>
            <person name="Imose N."/>
            <person name="Musashino K."/>
            <person name="Yuuki H."/>
            <person name="Oshima A."/>
            <person name="Sasaki N."/>
            <person name="Aotsuka S."/>
            <person name="Yoshikawa Y."/>
            <person name="Matsunawa H."/>
            <person name="Ichihara T."/>
            <person name="Shiohata N."/>
            <person name="Sano S."/>
            <person name="Moriya S."/>
            <person name="Momiyama H."/>
            <person name="Satoh N."/>
            <person name="Takami S."/>
            <person name="Terashima Y."/>
            <person name="Suzuki O."/>
            <person name="Nakagawa S."/>
            <person name="Senoh A."/>
            <person name="Mizoguchi H."/>
            <person name="Goto Y."/>
            <person name="Shimizu F."/>
            <person name="Wakebe H."/>
            <person name="Hishigaki H."/>
            <person name="Watanabe T."/>
            <person name="Sugiyama A."/>
            <person name="Takemoto M."/>
            <person name="Kawakami B."/>
            <person name="Yamazaki M."/>
            <person name="Watanabe K."/>
            <person name="Kumagai A."/>
            <person name="Itakura S."/>
            <person name="Fukuzumi Y."/>
            <person name="Fujimori Y."/>
            <person name="Komiyama M."/>
            <person name="Tashiro H."/>
            <person name="Tanigami A."/>
            <person name="Fujiwara T."/>
            <person name="Ono T."/>
            <person name="Yamada K."/>
            <person name="Fujii Y."/>
            <person name="Ozaki K."/>
            <person name="Hirao M."/>
            <person name="Ohmori Y."/>
            <person name="Kawabata A."/>
            <person name="Hikiji T."/>
            <person name="Kobatake N."/>
            <person name="Inagaki H."/>
            <person name="Ikema Y."/>
            <person name="Okamoto S."/>
            <person name="Okitani R."/>
            <person name="Kawakami T."/>
            <person name="Noguchi S."/>
            <person name="Itoh T."/>
            <person name="Shigeta K."/>
            <person name="Senba T."/>
            <person name="Matsumura K."/>
            <person name="Nakajima Y."/>
            <person name="Mizuno T."/>
            <person name="Morinaga M."/>
            <person name="Sasaki M."/>
            <person name="Togashi T."/>
            <person name="Oyama M."/>
            <person name="Hata H."/>
            <person name="Watanabe M."/>
            <person name="Komatsu T."/>
            <person name="Mizushima-Sugano J."/>
            <person name="Satoh T."/>
            <person name="Shirai Y."/>
            <person name="Takahashi Y."/>
            <person name="Nakagawa K."/>
            <person name="Okumura K."/>
            <person name="Nagase T."/>
            <person name="Nomura N."/>
            <person name="Kikuchi H."/>
            <person name="Masuho Y."/>
            <person name="Yamashita R."/>
            <person name="Nakai K."/>
            <person name="Yada T."/>
            <person name="Nakamura Y."/>
            <person name="Ohara O."/>
            <person name="Isogai T."/>
            <person name="Sugano S."/>
        </authorList>
    </citation>
    <scope>NUCLEOTIDE SEQUENCE [LARGE SCALE MRNA] (ISOFORMS 1 AND 2)</scope>
    <source>
        <tissue>Mammary gland</tissue>
    </source>
</reference>
<reference key="4">
    <citation type="journal article" date="2007" name="BMC Genomics">
        <title>The full-ORF clone resource of the German cDNA consortium.</title>
        <authorList>
            <person name="Bechtel S."/>
            <person name="Rosenfelder H."/>
            <person name="Duda A."/>
            <person name="Schmidt C.P."/>
            <person name="Ernst U."/>
            <person name="Wellenreuther R."/>
            <person name="Mehrle A."/>
            <person name="Schuster C."/>
            <person name="Bahr A."/>
            <person name="Bloecker H."/>
            <person name="Heubner D."/>
            <person name="Hoerlein A."/>
            <person name="Michel G."/>
            <person name="Wedler H."/>
            <person name="Koehrer K."/>
            <person name="Ottenwaelder B."/>
            <person name="Poustka A."/>
            <person name="Wiemann S."/>
            <person name="Schupp I."/>
        </authorList>
    </citation>
    <scope>NUCLEOTIDE SEQUENCE [LARGE SCALE MRNA] (ISOFORM 1)</scope>
    <source>
        <tissue>Amygdala</tissue>
    </source>
</reference>
<reference key="5">
    <citation type="journal article" date="2003" name="Nature">
        <title>The DNA sequence of human chromosome 7.</title>
        <authorList>
            <person name="Hillier L.W."/>
            <person name="Fulton R.S."/>
            <person name="Fulton L.A."/>
            <person name="Graves T.A."/>
            <person name="Pepin K.H."/>
            <person name="Wagner-McPherson C."/>
            <person name="Layman D."/>
            <person name="Maas J."/>
            <person name="Jaeger S."/>
            <person name="Walker R."/>
            <person name="Wylie K."/>
            <person name="Sekhon M."/>
            <person name="Becker M.C."/>
            <person name="O'Laughlin M.D."/>
            <person name="Schaller M.E."/>
            <person name="Fewell G.A."/>
            <person name="Delehaunty K.D."/>
            <person name="Miner T.L."/>
            <person name="Nash W.E."/>
            <person name="Cordes M."/>
            <person name="Du H."/>
            <person name="Sun H."/>
            <person name="Edwards J."/>
            <person name="Bradshaw-Cordum H."/>
            <person name="Ali J."/>
            <person name="Andrews S."/>
            <person name="Isak A."/>
            <person name="Vanbrunt A."/>
            <person name="Nguyen C."/>
            <person name="Du F."/>
            <person name="Lamar B."/>
            <person name="Courtney L."/>
            <person name="Kalicki J."/>
            <person name="Ozersky P."/>
            <person name="Bielicki L."/>
            <person name="Scott K."/>
            <person name="Holmes A."/>
            <person name="Harkins R."/>
            <person name="Harris A."/>
            <person name="Strong C.M."/>
            <person name="Hou S."/>
            <person name="Tomlinson C."/>
            <person name="Dauphin-Kohlberg S."/>
            <person name="Kozlowicz-Reilly A."/>
            <person name="Leonard S."/>
            <person name="Rohlfing T."/>
            <person name="Rock S.M."/>
            <person name="Tin-Wollam A.-M."/>
            <person name="Abbott A."/>
            <person name="Minx P."/>
            <person name="Maupin R."/>
            <person name="Strowmatt C."/>
            <person name="Latreille P."/>
            <person name="Miller N."/>
            <person name="Johnson D."/>
            <person name="Murray J."/>
            <person name="Woessner J.P."/>
            <person name="Wendl M.C."/>
            <person name="Yang S.-P."/>
            <person name="Schultz B.R."/>
            <person name="Wallis J.W."/>
            <person name="Spieth J."/>
            <person name="Bieri T.A."/>
            <person name="Nelson J.O."/>
            <person name="Berkowicz N."/>
            <person name="Wohldmann P.E."/>
            <person name="Cook L.L."/>
            <person name="Hickenbotham M.T."/>
            <person name="Eldred J."/>
            <person name="Williams D."/>
            <person name="Bedell J.A."/>
            <person name="Mardis E.R."/>
            <person name="Clifton S.W."/>
            <person name="Chissoe S.L."/>
            <person name="Marra M.A."/>
            <person name="Raymond C."/>
            <person name="Haugen E."/>
            <person name="Gillett W."/>
            <person name="Zhou Y."/>
            <person name="James R."/>
            <person name="Phelps K."/>
            <person name="Iadanoto S."/>
            <person name="Bubb K."/>
            <person name="Simms E."/>
            <person name="Levy R."/>
            <person name="Clendenning J."/>
            <person name="Kaul R."/>
            <person name="Kent W.J."/>
            <person name="Furey T.S."/>
            <person name="Baertsch R.A."/>
            <person name="Brent M.R."/>
            <person name="Keibler E."/>
            <person name="Flicek P."/>
            <person name="Bork P."/>
            <person name="Suyama M."/>
            <person name="Bailey J.A."/>
            <person name="Portnoy M.E."/>
            <person name="Torrents D."/>
            <person name="Chinwalla A.T."/>
            <person name="Gish W.R."/>
            <person name="Eddy S.R."/>
            <person name="McPherson J.D."/>
            <person name="Olson M.V."/>
            <person name="Eichler E.E."/>
            <person name="Green E.D."/>
            <person name="Waterston R.H."/>
            <person name="Wilson R.K."/>
        </authorList>
    </citation>
    <scope>NUCLEOTIDE SEQUENCE [LARGE SCALE GENOMIC DNA]</scope>
</reference>
<reference key="6">
    <citation type="journal article" date="2003" name="Science">
        <title>Human chromosome 7: DNA sequence and biology.</title>
        <authorList>
            <person name="Scherer S.W."/>
            <person name="Cheung J."/>
            <person name="MacDonald J.R."/>
            <person name="Osborne L.R."/>
            <person name="Nakabayashi K."/>
            <person name="Herbrick J.-A."/>
            <person name="Carson A.R."/>
            <person name="Parker-Katiraee L."/>
            <person name="Skaug J."/>
            <person name="Khaja R."/>
            <person name="Zhang J."/>
            <person name="Hudek A.K."/>
            <person name="Li M."/>
            <person name="Haddad M."/>
            <person name="Duggan G.E."/>
            <person name="Fernandez B.A."/>
            <person name="Kanematsu E."/>
            <person name="Gentles S."/>
            <person name="Christopoulos C.C."/>
            <person name="Choufani S."/>
            <person name="Kwasnicka D."/>
            <person name="Zheng X.H."/>
            <person name="Lai Z."/>
            <person name="Nusskern D.R."/>
            <person name="Zhang Q."/>
            <person name="Gu Z."/>
            <person name="Lu F."/>
            <person name="Zeesman S."/>
            <person name="Nowaczyk M.J."/>
            <person name="Teshima I."/>
            <person name="Chitayat D."/>
            <person name="Shuman C."/>
            <person name="Weksberg R."/>
            <person name="Zackai E.H."/>
            <person name="Grebe T.A."/>
            <person name="Cox S.R."/>
            <person name="Kirkpatrick S.J."/>
            <person name="Rahman N."/>
            <person name="Friedman J.M."/>
            <person name="Heng H.H.Q."/>
            <person name="Pelicci P.G."/>
            <person name="Lo-Coco F."/>
            <person name="Belloni E."/>
            <person name="Shaffer L.G."/>
            <person name="Pober B."/>
            <person name="Morton C.C."/>
            <person name="Gusella J.F."/>
            <person name="Bruns G.A.P."/>
            <person name="Korf B.R."/>
            <person name="Quade B.J."/>
            <person name="Ligon A.H."/>
            <person name="Ferguson H."/>
            <person name="Higgins A.W."/>
            <person name="Leach N.T."/>
            <person name="Herrick S.R."/>
            <person name="Lemyre E."/>
            <person name="Farra C.G."/>
            <person name="Kim H.-G."/>
            <person name="Summers A.M."/>
            <person name="Gripp K.W."/>
            <person name="Roberts W."/>
            <person name="Szatmari P."/>
            <person name="Winsor E.J.T."/>
            <person name="Grzeschik K.-H."/>
            <person name="Teebi A."/>
            <person name="Minassian B.A."/>
            <person name="Kere J."/>
            <person name="Armengol L."/>
            <person name="Pujana M.A."/>
            <person name="Estivill X."/>
            <person name="Wilson M.D."/>
            <person name="Koop B.F."/>
            <person name="Tosi S."/>
            <person name="Moore G.E."/>
            <person name="Boright A.P."/>
            <person name="Zlotorynski E."/>
            <person name="Kerem B."/>
            <person name="Kroisel P.M."/>
            <person name="Petek E."/>
            <person name="Oscier D.G."/>
            <person name="Mould S.J."/>
            <person name="Doehner H."/>
            <person name="Doehner K."/>
            <person name="Rommens J.M."/>
            <person name="Vincent J.B."/>
            <person name="Venter J.C."/>
            <person name="Li P.W."/>
            <person name="Mural R.J."/>
            <person name="Adams M.D."/>
            <person name="Tsui L.-C."/>
        </authorList>
    </citation>
    <scope>NUCLEOTIDE SEQUENCE [LARGE SCALE GENOMIC DNA]</scope>
</reference>
<reference key="7">
    <citation type="submission" date="2005-09" db="EMBL/GenBank/DDBJ databases">
        <authorList>
            <person name="Mural R.J."/>
            <person name="Istrail S."/>
            <person name="Sutton G.G."/>
            <person name="Florea L."/>
            <person name="Halpern A.L."/>
            <person name="Mobarry C.M."/>
            <person name="Lippert R."/>
            <person name="Walenz B."/>
            <person name="Shatkay H."/>
            <person name="Dew I."/>
            <person name="Miller J.R."/>
            <person name="Flanigan M.J."/>
            <person name="Edwards N.J."/>
            <person name="Bolanos R."/>
            <person name="Fasulo D."/>
            <person name="Halldorsson B.V."/>
            <person name="Hannenhalli S."/>
            <person name="Turner R."/>
            <person name="Yooseph S."/>
            <person name="Lu F."/>
            <person name="Nusskern D.R."/>
            <person name="Shue B.C."/>
            <person name="Zheng X.H."/>
            <person name="Zhong F."/>
            <person name="Delcher A.L."/>
            <person name="Huson D.H."/>
            <person name="Kravitz S.A."/>
            <person name="Mouchard L."/>
            <person name="Reinert K."/>
            <person name="Remington K.A."/>
            <person name="Clark A.G."/>
            <person name="Waterman M.S."/>
            <person name="Eichler E.E."/>
            <person name="Adams M.D."/>
            <person name="Hunkapiller M.W."/>
            <person name="Myers E.W."/>
            <person name="Venter J.C."/>
        </authorList>
    </citation>
    <scope>NUCLEOTIDE SEQUENCE [LARGE SCALE GENOMIC DNA]</scope>
</reference>
<reference key="8">
    <citation type="journal article" date="2004" name="Genome Res.">
        <title>The status, quality, and expansion of the NIH full-length cDNA project: the Mammalian Gene Collection (MGC).</title>
        <authorList>
            <consortium name="The MGC Project Team"/>
        </authorList>
    </citation>
    <scope>NUCLEOTIDE SEQUENCE [LARGE SCALE MRNA] (ISOFORM 1)</scope>
    <scope>VARIANT VAL-467</scope>
    <source>
        <tissue>Placenta</tissue>
    </source>
</reference>
<organism>
    <name type="scientific">Homo sapiens</name>
    <name type="common">Human</name>
    <dbReference type="NCBI Taxonomy" id="9606"/>
    <lineage>
        <taxon>Eukaryota</taxon>
        <taxon>Metazoa</taxon>
        <taxon>Chordata</taxon>
        <taxon>Craniata</taxon>
        <taxon>Vertebrata</taxon>
        <taxon>Euteleostomi</taxon>
        <taxon>Mammalia</taxon>
        <taxon>Eutheria</taxon>
        <taxon>Euarchontoglires</taxon>
        <taxon>Primates</taxon>
        <taxon>Haplorrhini</taxon>
        <taxon>Catarrhini</taxon>
        <taxon>Hominidae</taxon>
        <taxon>Homo</taxon>
    </lineage>
</organism>
<feature type="chain" id="PRO_0000085209" description="Galactose-3-O-sulfotransferase 4">
    <location>
        <begin position="1"/>
        <end position="486"/>
    </location>
</feature>
<feature type="topological domain" description="Cytoplasmic" evidence="1">
    <location>
        <begin position="1"/>
        <end position="18"/>
    </location>
</feature>
<feature type="transmembrane region" description="Helical; Signal-anchor for type II membrane protein" evidence="1">
    <location>
        <begin position="19"/>
        <end position="39"/>
    </location>
</feature>
<feature type="topological domain" description="Lumenal" evidence="1">
    <location>
        <begin position="40"/>
        <end position="486"/>
    </location>
</feature>
<feature type="glycosylation site" description="N-linked (GlcNAc...) asparagine" evidence="1">
    <location>
        <position position="374"/>
    </location>
</feature>
<feature type="splice variant" id="VSP_057006" description="In isoform 2." evidence="5">
    <original>MGPLSPARTLRLWGPRSLGVALGVFMTIGFALQLLGGPFQRRLPGLQLRQPSAPSLRPALPSCPPRQRLVFLKTHKSGSS</original>
    <variation>MTPRSPTSAFRSCTAVSSCLCPSSWPWLHLSVTSPFPVPHGPSLSCQDAAALGTSEPGGGSGSLHDHWLCTPALGRALPE</variation>
    <location>
        <begin position="1"/>
        <end position="80"/>
    </location>
</feature>
<feature type="splice variant" id="VSP_057007" description="In isoform 2." evidence="5">
    <location>
        <begin position="81"/>
        <end position="142"/>
    </location>
</feature>
<feature type="sequence variant" id="VAR_021989" description="In dbSNP:rs3800952.">
    <original>R</original>
    <variation>Q</variation>
    <location>
        <position position="353"/>
    </location>
</feature>
<feature type="sequence variant" id="VAR_033736" description="In dbSNP:rs3823646." evidence="3 4">
    <original>A</original>
    <variation>V</variation>
    <location>
        <position position="467"/>
    </location>
</feature>
<feature type="sequence conflict" description="In Ref. 3; BAB13977." evidence="6" ref="3">
    <original>M</original>
    <variation>L</variation>
    <location>
        <position position="137"/>
    </location>
</feature>
<feature type="sequence conflict" description="In Ref. 2; AAL55759." evidence="6" ref="2">
    <original>RGDH</original>
    <variation>VGTT</variation>
    <location>
        <begin position="201"/>
        <end position="204"/>
    </location>
</feature>
<feature type="sequence conflict" description="In Ref. 3; BAB13977." evidence="6" ref="3">
    <original>S</original>
    <variation>R</variation>
    <location>
        <position position="441"/>
    </location>
</feature>
<keyword id="KW-0025">Alternative splicing</keyword>
<keyword id="KW-0325">Glycoprotein</keyword>
<keyword id="KW-0333">Golgi apparatus</keyword>
<keyword id="KW-0472">Membrane</keyword>
<keyword id="KW-1267">Proteomics identification</keyword>
<keyword id="KW-1185">Reference proteome</keyword>
<keyword id="KW-0735">Signal-anchor</keyword>
<keyword id="KW-0808">Transferase</keyword>
<keyword id="KW-0812">Transmembrane</keyword>
<keyword id="KW-1133">Transmembrane helix</keyword>
<dbReference type="EC" id="2.8.2.-"/>
<dbReference type="EMBL" id="AF316113">
    <property type="protein sequence ID" value="AAK73365.1"/>
    <property type="molecule type" value="mRNA"/>
</dbReference>
<dbReference type="EMBL" id="AF289575">
    <property type="protein sequence ID" value="AAL55759.1"/>
    <property type="molecule type" value="mRNA"/>
</dbReference>
<dbReference type="EMBL" id="AK022178">
    <property type="protein sequence ID" value="BAB13977.1"/>
    <property type="molecule type" value="mRNA"/>
</dbReference>
<dbReference type="EMBL" id="AK301591">
    <property type="protein sequence ID" value="BAG63080.1"/>
    <property type="molecule type" value="mRNA"/>
</dbReference>
<dbReference type="EMBL" id="AL833824">
    <property type="protein sequence ID" value="CAD38686.2"/>
    <property type="molecule type" value="mRNA"/>
</dbReference>
<dbReference type="EMBL" id="AC073842">
    <property type="status" value="NOT_ANNOTATED_CDS"/>
    <property type="molecule type" value="Genomic_DNA"/>
</dbReference>
<dbReference type="EMBL" id="CH236956">
    <property type="protein sequence ID" value="EAL23847.1"/>
    <property type="molecule type" value="Genomic_DNA"/>
</dbReference>
<dbReference type="EMBL" id="CH471091">
    <property type="protein sequence ID" value="EAW76575.1"/>
    <property type="molecule type" value="Genomic_DNA"/>
</dbReference>
<dbReference type="EMBL" id="CH471091">
    <property type="protein sequence ID" value="EAW76577.1"/>
    <property type="molecule type" value="Genomic_DNA"/>
</dbReference>
<dbReference type="EMBL" id="CH471091">
    <property type="protein sequence ID" value="EAW76579.1"/>
    <property type="molecule type" value="Genomic_DNA"/>
</dbReference>
<dbReference type="EMBL" id="BC012976">
    <property type="protein sequence ID" value="AAH12976.1"/>
    <property type="molecule type" value="mRNA"/>
</dbReference>
<dbReference type="CCDS" id="CCDS5688.1">
    <molecule id="Q96RP7-1"/>
</dbReference>
<dbReference type="RefSeq" id="NP_078913.3">
    <molecule id="Q96RP7-1"/>
    <property type="nucleotide sequence ID" value="NM_024637.4"/>
</dbReference>
<dbReference type="BioGRID" id="122811">
    <property type="interactions" value="3"/>
</dbReference>
<dbReference type="FunCoup" id="Q96RP7">
    <property type="interactions" value="82"/>
</dbReference>
<dbReference type="IntAct" id="Q96RP7">
    <property type="interactions" value="1"/>
</dbReference>
<dbReference type="STRING" id="9606.ENSP00000353142"/>
<dbReference type="GlyCosmos" id="Q96RP7">
    <property type="glycosylation" value="1 site, No reported glycans"/>
</dbReference>
<dbReference type="GlyGen" id="Q96RP7">
    <property type="glycosylation" value="2 sites, 1 O-linked glycan (1 site)"/>
</dbReference>
<dbReference type="iPTMnet" id="Q96RP7"/>
<dbReference type="PhosphoSitePlus" id="Q96RP7"/>
<dbReference type="BioMuta" id="GAL3ST4"/>
<dbReference type="DMDM" id="47116570"/>
<dbReference type="MassIVE" id="Q96RP7"/>
<dbReference type="PaxDb" id="9606-ENSP00000353142"/>
<dbReference type="PeptideAtlas" id="Q96RP7"/>
<dbReference type="ProteomicsDB" id="5356"/>
<dbReference type="ProteomicsDB" id="77998">
    <molecule id="Q96RP7-1"/>
</dbReference>
<dbReference type="Antibodypedia" id="30607">
    <property type="antibodies" value="197 antibodies from 24 providers"/>
</dbReference>
<dbReference type="DNASU" id="79690"/>
<dbReference type="Ensembl" id="ENST00000360039.9">
    <molecule id="Q96RP7-1"/>
    <property type="protein sequence ID" value="ENSP00000353142.4"/>
    <property type="gene ID" value="ENSG00000197093.11"/>
</dbReference>
<dbReference type="Ensembl" id="ENST00000413800.5">
    <molecule id="Q96RP7-1"/>
    <property type="protein sequence ID" value="ENSP00000400451.1"/>
    <property type="gene ID" value="ENSG00000197093.11"/>
</dbReference>
<dbReference type="GeneID" id="79690"/>
<dbReference type="KEGG" id="hsa:79690"/>
<dbReference type="MANE-Select" id="ENST00000360039.9">
    <property type="protein sequence ID" value="ENSP00000353142.4"/>
    <property type="RefSeq nucleotide sequence ID" value="NM_024637.5"/>
    <property type="RefSeq protein sequence ID" value="NP_078913.3"/>
</dbReference>
<dbReference type="UCSC" id="uc003utt.4">
    <molecule id="Q96RP7-1"/>
    <property type="organism name" value="human"/>
</dbReference>
<dbReference type="AGR" id="HGNC:24145"/>
<dbReference type="CTD" id="79690"/>
<dbReference type="DisGeNET" id="79690"/>
<dbReference type="GeneCards" id="GAL3ST4"/>
<dbReference type="HGNC" id="HGNC:24145">
    <property type="gene designation" value="GAL3ST4"/>
</dbReference>
<dbReference type="HPA" id="ENSG00000197093">
    <property type="expression patterns" value="Tissue enhanced (skin)"/>
</dbReference>
<dbReference type="MIM" id="608235">
    <property type="type" value="gene"/>
</dbReference>
<dbReference type="neXtProt" id="NX_Q96RP7"/>
<dbReference type="OpenTargets" id="ENSG00000197093"/>
<dbReference type="PharmGKB" id="PA134921067"/>
<dbReference type="VEuPathDB" id="HostDB:ENSG00000197093"/>
<dbReference type="eggNOG" id="ENOG502QSHR">
    <property type="taxonomic scope" value="Eukaryota"/>
</dbReference>
<dbReference type="GeneTree" id="ENSGT00950000182923"/>
<dbReference type="HOGENOM" id="CLU_040616_1_2_1"/>
<dbReference type="InParanoid" id="Q96RP7"/>
<dbReference type="OMA" id="PRSHVMF"/>
<dbReference type="OrthoDB" id="514299at2759"/>
<dbReference type="PAN-GO" id="Q96RP7">
    <property type="GO annotations" value="1 GO annotation based on evolutionary models"/>
</dbReference>
<dbReference type="PhylomeDB" id="Q96RP7"/>
<dbReference type="TreeFam" id="TF314802"/>
<dbReference type="PathwayCommons" id="Q96RP7"/>
<dbReference type="SignaLink" id="Q96RP7"/>
<dbReference type="UniPathway" id="UPA00353"/>
<dbReference type="BioGRID-ORCS" id="79690">
    <property type="hits" value="18 hits in 1147 CRISPR screens"/>
</dbReference>
<dbReference type="GeneWiki" id="GAL3ST4"/>
<dbReference type="GenomeRNAi" id="79690"/>
<dbReference type="Pharos" id="Q96RP7">
    <property type="development level" value="Tdark"/>
</dbReference>
<dbReference type="PRO" id="PR:Q96RP7"/>
<dbReference type="Proteomes" id="UP000005640">
    <property type="component" value="Chromosome 7"/>
</dbReference>
<dbReference type="RNAct" id="Q96RP7">
    <property type="molecule type" value="protein"/>
</dbReference>
<dbReference type="Bgee" id="ENSG00000197093">
    <property type="expression patterns" value="Expressed in parotid gland and 154 other cell types or tissues"/>
</dbReference>
<dbReference type="ExpressionAtlas" id="Q96RP7">
    <property type="expression patterns" value="baseline and differential"/>
</dbReference>
<dbReference type="GO" id="GO:0070062">
    <property type="term" value="C:extracellular exosome"/>
    <property type="evidence" value="ECO:0007005"/>
    <property type="project" value="UniProtKB"/>
</dbReference>
<dbReference type="GO" id="GO:0032580">
    <property type="term" value="C:Golgi cisterna membrane"/>
    <property type="evidence" value="ECO:0007669"/>
    <property type="project" value="UniProtKB-SubCell"/>
</dbReference>
<dbReference type="GO" id="GO:0016020">
    <property type="term" value="C:membrane"/>
    <property type="evidence" value="ECO:0000314"/>
    <property type="project" value="UniProtKB"/>
</dbReference>
<dbReference type="GO" id="GO:0050656">
    <property type="term" value="F:3'-phosphoadenosine 5'-phosphosulfate binding"/>
    <property type="evidence" value="ECO:0000303"/>
    <property type="project" value="UniProtKB"/>
</dbReference>
<dbReference type="GO" id="GO:0050694">
    <property type="term" value="F:galactose 3-O-sulfotransferase activity"/>
    <property type="evidence" value="ECO:0000314"/>
    <property type="project" value="UniProtKB"/>
</dbReference>
<dbReference type="GO" id="GO:0001733">
    <property type="term" value="F:galactosylceramide sulfotransferase activity"/>
    <property type="evidence" value="ECO:0007669"/>
    <property type="project" value="InterPro"/>
</dbReference>
<dbReference type="GO" id="GO:0050698">
    <property type="term" value="F:proteoglycan sulfotransferase activity"/>
    <property type="evidence" value="ECO:0000303"/>
    <property type="project" value="UniProtKB"/>
</dbReference>
<dbReference type="GO" id="GO:0007267">
    <property type="term" value="P:cell-cell signaling"/>
    <property type="evidence" value="ECO:0000303"/>
    <property type="project" value="UniProtKB"/>
</dbReference>
<dbReference type="GO" id="GO:0009247">
    <property type="term" value="P:glycolipid biosynthetic process"/>
    <property type="evidence" value="ECO:0007669"/>
    <property type="project" value="InterPro"/>
</dbReference>
<dbReference type="GO" id="GO:0009101">
    <property type="term" value="P:glycoprotein biosynthetic process"/>
    <property type="evidence" value="ECO:0000314"/>
    <property type="project" value="MGI"/>
</dbReference>
<dbReference type="GO" id="GO:0009100">
    <property type="term" value="P:glycoprotein metabolic process"/>
    <property type="evidence" value="ECO:0000303"/>
    <property type="project" value="UniProtKB"/>
</dbReference>
<dbReference type="GO" id="GO:0009311">
    <property type="term" value="P:oligosaccharide metabolic process"/>
    <property type="evidence" value="ECO:0000303"/>
    <property type="project" value="UniProtKB"/>
</dbReference>
<dbReference type="GO" id="GO:0030166">
    <property type="term" value="P:proteoglycan biosynthetic process"/>
    <property type="evidence" value="ECO:0000303"/>
    <property type="project" value="UniProtKB"/>
</dbReference>
<dbReference type="GO" id="GO:0006790">
    <property type="term" value="P:sulfur compound metabolic process"/>
    <property type="evidence" value="ECO:0000303"/>
    <property type="project" value="UniProtKB"/>
</dbReference>
<dbReference type="FunFam" id="3.40.50.300:FF:002733">
    <property type="entry name" value="Galactose-3-O-sulfotransferase 4"/>
    <property type="match status" value="1"/>
</dbReference>
<dbReference type="Gene3D" id="3.40.50.300">
    <property type="entry name" value="P-loop containing nucleotide triphosphate hydrolases"/>
    <property type="match status" value="1"/>
</dbReference>
<dbReference type="InterPro" id="IPR009729">
    <property type="entry name" value="Gal-3-0_sulfotransfrase"/>
</dbReference>
<dbReference type="InterPro" id="IPR027417">
    <property type="entry name" value="P-loop_NTPase"/>
</dbReference>
<dbReference type="PANTHER" id="PTHR14647">
    <property type="entry name" value="GALACTOSE-3-O-SULFOTRANSFERASE"/>
    <property type="match status" value="1"/>
</dbReference>
<dbReference type="PANTHER" id="PTHR14647:SF57">
    <property type="entry name" value="GALACTOSE-3-O-SULFOTRANSFERASE 4"/>
    <property type="match status" value="1"/>
</dbReference>
<dbReference type="Pfam" id="PF06990">
    <property type="entry name" value="Gal-3-0_sulfotr"/>
    <property type="match status" value="2"/>
</dbReference>
<dbReference type="SUPFAM" id="SSF52540">
    <property type="entry name" value="P-loop containing nucleoside triphosphate hydrolases"/>
    <property type="match status" value="1"/>
</dbReference>
<sequence length="486" mass="54166">MGPLSPARTLRLWGPRSLGVALGVFMTIGFALQLLGGPFQRRLPGLQLRQPSAPSLRPALPSCPPRQRLVFLKTHKSGSSSVLSLLHRYGDQHGLRFALPARYQFGYPKLFQASRVKGYRPQGGGTQLPFHILCHHMRFNLKEVLQVMPSDSFFFSIVRDPAALARSAFSYYKSTSSAFRKSPSLAAFLANPRGFYRPGARGDHYARNLLWFDFGLPFPPEKRAKRGNIHPPRDPNPPQLQVLPSGAGPRAQTLNPNALIHPVSTVTDHRSQISSPASFDLGSSSFIQWGLAWLDSVFDLVMVAEYFDESLVLLADALCWGLDDVVGFMHNAQAGHKQGLSTVSNSGLTAEDRQLTARARAWNNLDWALYVHFNRSLWARIEKYGQGRLQTAVAELRARREALAKHCLVGGEASDPKYITDRRFRPFQFGSAKVLGYILRSGLSPQDQEECERLATPELQYKDKLDAKQFPPTVSLPLKTSRPLSP</sequence>
<protein>
    <recommendedName>
        <fullName>Galactose-3-O-sulfotransferase 4</fullName>
        <shortName>Gal3ST-4</shortName>
        <ecNumber>2.8.2.-</ecNumber>
    </recommendedName>
    <alternativeName>
        <fullName>Beta-galactose-3-O-sulfotransferase 4</fullName>
    </alternativeName>
    <alternativeName>
        <fullName>Gal-beta-1,3-GalNAc 3'-sulfotransferase</fullName>
    </alternativeName>
</protein>
<accession>Q96RP7</accession>
<accession>A4D2A8</accession>
<accession>B4DWL8</accession>
<accession>D6W5U5</accession>
<accession>Q8N3P7</accession>
<accession>Q8WZ17</accession>
<accession>Q96E33</accession>
<accession>Q9HA78</accession>
<comment type="function">
    <text evidence="2">Catalyzes the transfer of sulfate to beta-1,3-linked galactose residues in O-linked glycoproteins. Good substrates include asialofetuin, Gal-beta-1,3-GalNAc and Gal-beta-1,3 (GlcNAc-beta-1,6)GalNAc.</text>
</comment>
<comment type="cofactor">
    <cofactor>
        <name>Mn(2+)</name>
        <dbReference type="ChEBI" id="CHEBI:29035"/>
    </cofactor>
</comment>
<comment type="biophysicochemical properties">
    <phDependence>
        <text>Optimum pH is 6-7.</text>
    </phDependence>
</comment>
<comment type="pathway">
    <text>Protein modification; carbohydrate sulfation.</text>
</comment>
<comment type="subcellular location">
    <subcellularLocation>
        <location evidence="6">Golgi apparatus</location>
        <location evidence="6">Golgi stack membrane</location>
        <topology evidence="6">Single-pass type II membrane protein</topology>
    </subcellularLocation>
</comment>
<comment type="alternative products">
    <event type="alternative splicing"/>
    <isoform>
        <id>Q96RP7-1</id>
        <name>1</name>
        <sequence type="displayed"/>
    </isoform>
    <isoform>
        <id>Q96RP7-2</id>
        <name>2</name>
        <sequence type="described" ref="VSP_057006 VSP_057007"/>
    </isoform>
</comment>
<comment type="tissue specificity">
    <text evidence="2">Expressed mainly in placenta, thymus, testis, ovary, spinal cord, trachea and adrenal gland and at low levels in brain, lung, spleen, prostate, small intestine, colon, stomach thyroid and lymph node.</text>
</comment>
<comment type="similarity">
    <text evidence="6">Belongs to the galactose-3-O-sulfotransferase family.</text>
</comment>
<proteinExistence type="evidence at protein level"/>
<name>G3ST4_HUMAN</name>
<gene>
    <name type="primary">GAL3ST4</name>
    <name type="ORF">PP6968</name>
</gene>
<evidence type="ECO:0000255" key="1"/>
<evidence type="ECO:0000269" key="2">
    <source>
    </source>
</evidence>
<evidence type="ECO:0000269" key="3">
    <source>
    </source>
</evidence>
<evidence type="ECO:0000269" key="4">
    <source>
    </source>
</evidence>
<evidence type="ECO:0000303" key="5">
    <source>
    </source>
</evidence>
<evidence type="ECO:0000305" key="6"/>